<sequence>MNLILTLLINTLLSSVLVLIAFWLPQLNIYTEKSSPYECGFDPMVSARLPFSMKFFLVAITFLLFDLEIALLLPLPWASQTTNLKTMLTMALILISLLAASLAYEWTQKGLEWTE</sequence>
<protein>
    <recommendedName>
        <fullName evidence="1">NADH-ubiquinone oxidoreductase chain 3</fullName>
        <ecNumber evidence="1">7.1.1.2</ecNumber>
    </recommendedName>
    <alternativeName>
        <fullName>NADH dehydrogenase subunit 3</fullName>
    </alternativeName>
</protein>
<reference key="1">
    <citation type="journal article" date="1996" name="Mol. Biol. Evol.">
        <title>The complete mitochondrial DNA sequence of the greater Indian rhinoceros, Rhinoceros unicornis, and the Phylogenetic relationship among Carnivora, Perissodactyla, and Artiodactyla (+ Cetacea).</title>
        <authorList>
            <person name="Xu X."/>
            <person name="Janke A."/>
            <person name="Arnason U."/>
        </authorList>
    </citation>
    <scope>NUCLEOTIDE SEQUENCE [GENOMIC DNA]</scope>
    <source>
        <tissue>Kidney</tissue>
    </source>
</reference>
<accession>Q96066</accession>
<evidence type="ECO:0000250" key="1">
    <source>
        <dbReference type="UniProtKB" id="P03897"/>
    </source>
</evidence>
<evidence type="ECO:0000250" key="2">
    <source>
        <dbReference type="UniProtKB" id="P03898"/>
    </source>
</evidence>
<evidence type="ECO:0000255" key="3"/>
<evidence type="ECO:0000305" key="4"/>
<name>NU3M_RHIUN</name>
<keyword id="KW-0249">Electron transport</keyword>
<keyword id="KW-0472">Membrane</keyword>
<keyword id="KW-0496">Mitochondrion</keyword>
<keyword id="KW-0999">Mitochondrion inner membrane</keyword>
<keyword id="KW-0520">NAD</keyword>
<keyword id="KW-0679">Respiratory chain</keyword>
<keyword id="KW-1278">Translocase</keyword>
<keyword id="KW-0812">Transmembrane</keyword>
<keyword id="KW-1133">Transmembrane helix</keyword>
<keyword id="KW-0813">Transport</keyword>
<keyword id="KW-0830">Ubiquinone</keyword>
<proteinExistence type="inferred from homology"/>
<comment type="function">
    <text evidence="1">Core subunit of the mitochondrial membrane respiratory chain NADH dehydrogenase (Complex I) which catalyzes electron transfer from NADH through the respiratory chain, using ubiquinone as an electron acceptor. Essential for the catalytic activity of complex I.</text>
</comment>
<comment type="catalytic activity">
    <reaction evidence="1">
        <text>a ubiquinone + NADH + 5 H(+)(in) = a ubiquinol + NAD(+) + 4 H(+)(out)</text>
        <dbReference type="Rhea" id="RHEA:29091"/>
        <dbReference type="Rhea" id="RHEA-COMP:9565"/>
        <dbReference type="Rhea" id="RHEA-COMP:9566"/>
        <dbReference type="ChEBI" id="CHEBI:15378"/>
        <dbReference type="ChEBI" id="CHEBI:16389"/>
        <dbReference type="ChEBI" id="CHEBI:17976"/>
        <dbReference type="ChEBI" id="CHEBI:57540"/>
        <dbReference type="ChEBI" id="CHEBI:57945"/>
        <dbReference type="EC" id="7.1.1.2"/>
    </reaction>
</comment>
<comment type="subunit">
    <text evidence="1">Core subunit of respiratory chain NADH dehydrogenase (Complex I) which is composed of 45 different subunits. Interacts with TMEM186. Interacts with TMEM242 (By similarity).</text>
</comment>
<comment type="subcellular location">
    <subcellularLocation>
        <location evidence="2">Mitochondrion inner membrane</location>
        <topology evidence="3">Multi-pass membrane protein</topology>
    </subcellularLocation>
</comment>
<comment type="similarity">
    <text evidence="4">Belongs to the complex I subunit 3 family.</text>
</comment>
<feature type="chain" id="PRO_0000117825" description="NADH-ubiquinone oxidoreductase chain 3">
    <location>
        <begin position="1"/>
        <end position="115"/>
    </location>
</feature>
<feature type="transmembrane region" description="Helical" evidence="3">
    <location>
        <begin position="3"/>
        <end position="23"/>
    </location>
</feature>
<feature type="transmembrane region" description="Helical" evidence="3">
    <location>
        <begin position="55"/>
        <end position="75"/>
    </location>
</feature>
<feature type="transmembrane region" description="Helical" evidence="3">
    <location>
        <begin position="86"/>
        <end position="106"/>
    </location>
</feature>
<geneLocation type="mitochondrion"/>
<organism>
    <name type="scientific">Rhinoceros unicornis</name>
    <name type="common">Greater Indian rhinoceros</name>
    <dbReference type="NCBI Taxonomy" id="9809"/>
    <lineage>
        <taxon>Eukaryota</taxon>
        <taxon>Metazoa</taxon>
        <taxon>Chordata</taxon>
        <taxon>Craniata</taxon>
        <taxon>Vertebrata</taxon>
        <taxon>Euteleostomi</taxon>
        <taxon>Mammalia</taxon>
        <taxon>Eutheria</taxon>
        <taxon>Laurasiatheria</taxon>
        <taxon>Perissodactyla</taxon>
        <taxon>Rhinocerotidae</taxon>
        <taxon>Rhinoceros</taxon>
    </lineage>
</organism>
<dbReference type="EC" id="7.1.1.2" evidence="1"/>
<dbReference type="EMBL" id="X97336">
    <property type="protein sequence ID" value="CAA66008.1"/>
    <property type="molecule type" value="Genomic_DNA"/>
</dbReference>
<dbReference type="PIR" id="T11254">
    <property type="entry name" value="T11254"/>
</dbReference>
<dbReference type="RefSeq" id="NP_007375.1">
    <property type="nucleotide sequence ID" value="NC_001779.1"/>
</dbReference>
<dbReference type="SMR" id="Q96066"/>
<dbReference type="GeneID" id="808049"/>
<dbReference type="CTD" id="4537"/>
<dbReference type="GO" id="GO:0005743">
    <property type="term" value="C:mitochondrial inner membrane"/>
    <property type="evidence" value="ECO:0000250"/>
    <property type="project" value="UniProtKB"/>
</dbReference>
<dbReference type="GO" id="GO:0030964">
    <property type="term" value="C:NADH dehydrogenase complex"/>
    <property type="evidence" value="ECO:0007669"/>
    <property type="project" value="TreeGrafter"/>
</dbReference>
<dbReference type="GO" id="GO:0008137">
    <property type="term" value="F:NADH dehydrogenase (ubiquinone) activity"/>
    <property type="evidence" value="ECO:0000250"/>
    <property type="project" value="UniProtKB"/>
</dbReference>
<dbReference type="GO" id="GO:0006120">
    <property type="term" value="P:mitochondrial electron transport, NADH to ubiquinone"/>
    <property type="evidence" value="ECO:0000250"/>
    <property type="project" value="UniProtKB"/>
</dbReference>
<dbReference type="FunFam" id="1.20.58.1610:FF:000004">
    <property type="entry name" value="NADH-quinone oxidoreductase subunit A"/>
    <property type="match status" value="1"/>
</dbReference>
<dbReference type="Gene3D" id="1.20.58.1610">
    <property type="entry name" value="NADH:ubiquinone/plastoquinone oxidoreductase, chain 3"/>
    <property type="match status" value="1"/>
</dbReference>
<dbReference type="InterPro" id="IPR000440">
    <property type="entry name" value="NADH_UbQ/plastoQ_OxRdtase_su3"/>
</dbReference>
<dbReference type="InterPro" id="IPR038430">
    <property type="entry name" value="NDAH_ubi_oxred_su3_sf"/>
</dbReference>
<dbReference type="PANTHER" id="PTHR11058">
    <property type="entry name" value="NADH-UBIQUINONE OXIDOREDUCTASE CHAIN 3"/>
    <property type="match status" value="1"/>
</dbReference>
<dbReference type="PANTHER" id="PTHR11058:SF9">
    <property type="entry name" value="NADH-UBIQUINONE OXIDOREDUCTASE CHAIN 3"/>
    <property type="match status" value="1"/>
</dbReference>
<dbReference type="Pfam" id="PF00507">
    <property type="entry name" value="Oxidored_q4"/>
    <property type="match status" value="1"/>
</dbReference>
<gene>
    <name evidence="1" type="primary">MT-ND3</name>
    <name type="synonym">MTND3</name>
    <name type="synonym">NADH3</name>
    <name type="synonym">ND3</name>
</gene>